<organism>
    <name type="scientific">Sulfolobus acidocaldarius (strain ATCC 33909 / DSM 639 / JCM 8929 / NBRC 15157 / NCIMB 11770)</name>
    <dbReference type="NCBI Taxonomy" id="330779"/>
    <lineage>
        <taxon>Archaea</taxon>
        <taxon>Thermoproteota</taxon>
        <taxon>Thermoprotei</taxon>
        <taxon>Sulfolobales</taxon>
        <taxon>Sulfolobaceae</taxon>
        <taxon>Sulfolobus</taxon>
    </lineage>
</organism>
<comment type="function">
    <text evidence="1">Catalyzes the irreversible transfer of a propylamine group from the amino donor S-adenosylmethioninamine (decarboxy-AdoMet) to putrescine (1,4-diaminobutane) to yield spermidine.</text>
</comment>
<comment type="catalytic activity">
    <reaction evidence="1">
        <text>S-adenosyl 3-(methylsulfanyl)propylamine + putrescine = S-methyl-5'-thioadenosine + spermidine + H(+)</text>
        <dbReference type="Rhea" id="RHEA:12721"/>
        <dbReference type="ChEBI" id="CHEBI:15378"/>
        <dbReference type="ChEBI" id="CHEBI:17509"/>
        <dbReference type="ChEBI" id="CHEBI:57443"/>
        <dbReference type="ChEBI" id="CHEBI:57834"/>
        <dbReference type="ChEBI" id="CHEBI:326268"/>
        <dbReference type="EC" id="2.5.1.16"/>
    </reaction>
</comment>
<comment type="pathway">
    <text evidence="1">Amine and polyamine biosynthesis; spermidine biosynthesis; spermidine from putrescine: step 1/1.</text>
</comment>
<comment type="subunit">
    <text evidence="1">Homodimer or homotetramer.</text>
</comment>
<comment type="subcellular location">
    <subcellularLocation>
        <location evidence="1">Cytoplasm</location>
    </subcellularLocation>
</comment>
<comment type="similarity">
    <text evidence="1">Belongs to the spermidine/spermine synthase family.</text>
</comment>
<proteinExistence type="inferred from homology"/>
<name>SPEE_SULAC</name>
<feature type="chain" id="PRO_0000156533" description="Polyamine aminopropyltransferase">
    <location>
        <begin position="1"/>
        <end position="302"/>
    </location>
</feature>
<feature type="domain" description="PABS" evidence="1">
    <location>
        <begin position="4"/>
        <end position="239"/>
    </location>
</feature>
<feature type="active site" description="Proton acceptor" evidence="1">
    <location>
        <position position="158"/>
    </location>
</feature>
<feature type="binding site" evidence="1">
    <location>
        <position position="33"/>
    </location>
    <ligand>
        <name>S-methyl-5'-thioadenosine</name>
        <dbReference type="ChEBI" id="CHEBI:17509"/>
    </ligand>
</feature>
<feature type="binding site" evidence="1">
    <location>
        <position position="64"/>
    </location>
    <ligand>
        <name>spermidine</name>
        <dbReference type="ChEBI" id="CHEBI:57834"/>
    </ligand>
</feature>
<feature type="binding site" evidence="1">
    <location>
        <position position="88"/>
    </location>
    <ligand>
        <name>spermidine</name>
        <dbReference type="ChEBI" id="CHEBI:57834"/>
    </ligand>
</feature>
<feature type="binding site" evidence="1">
    <location>
        <position position="108"/>
    </location>
    <ligand>
        <name>S-methyl-5'-thioadenosine</name>
        <dbReference type="ChEBI" id="CHEBI:17509"/>
    </ligand>
</feature>
<feature type="binding site" evidence="1">
    <location>
        <begin position="140"/>
        <end position="141"/>
    </location>
    <ligand>
        <name>S-methyl-5'-thioadenosine</name>
        <dbReference type="ChEBI" id="CHEBI:17509"/>
    </ligand>
</feature>
<feature type="binding site" evidence="1">
    <location>
        <position position="167"/>
    </location>
    <ligand>
        <name>S-methyl-5'-thioadenosine</name>
        <dbReference type="ChEBI" id="CHEBI:17509"/>
    </ligand>
</feature>
<dbReference type="EC" id="2.5.1.16" evidence="1"/>
<dbReference type="EMBL" id="CP000077">
    <property type="protein sequence ID" value="AAY80031.1"/>
    <property type="molecule type" value="Genomic_DNA"/>
</dbReference>
<dbReference type="RefSeq" id="WP_011277533.1">
    <property type="nucleotide sequence ID" value="NC_007181.1"/>
</dbReference>
<dbReference type="SMR" id="Q4JAZ8"/>
<dbReference type="STRING" id="330779.Saci_0643"/>
<dbReference type="GeneID" id="14551165"/>
<dbReference type="GeneID" id="78440986"/>
<dbReference type="KEGG" id="sai:Saci_0643"/>
<dbReference type="PATRIC" id="fig|330779.12.peg.618"/>
<dbReference type="eggNOG" id="arCOG00050">
    <property type="taxonomic scope" value="Archaea"/>
</dbReference>
<dbReference type="HOGENOM" id="CLU_048199_0_1_2"/>
<dbReference type="UniPathway" id="UPA00248">
    <property type="reaction ID" value="UER00314"/>
</dbReference>
<dbReference type="Proteomes" id="UP000001018">
    <property type="component" value="Chromosome"/>
</dbReference>
<dbReference type="GO" id="GO:0005737">
    <property type="term" value="C:cytoplasm"/>
    <property type="evidence" value="ECO:0007669"/>
    <property type="project" value="UniProtKB-SubCell"/>
</dbReference>
<dbReference type="GO" id="GO:0004766">
    <property type="term" value="F:spermidine synthase activity"/>
    <property type="evidence" value="ECO:0007669"/>
    <property type="project" value="UniProtKB-UniRule"/>
</dbReference>
<dbReference type="GO" id="GO:0010487">
    <property type="term" value="F:thermospermine synthase activity"/>
    <property type="evidence" value="ECO:0007669"/>
    <property type="project" value="TreeGrafter"/>
</dbReference>
<dbReference type="GO" id="GO:0008295">
    <property type="term" value="P:spermidine biosynthetic process"/>
    <property type="evidence" value="ECO:0007669"/>
    <property type="project" value="UniProtKB-UniRule"/>
</dbReference>
<dbReference type="CDD" id="cd02440">
    <property type="entry name" value="AdoMet_MTases"/>
    <property type="match status" value="1"/>
</dbReference>
<dbReference type="FunFam" id="3.40.50.150:FF:000088">
    <property type="entry name" value="Polyamine aminopropyltransferase"/>
    <property type="match status" value="1"/>
</dbReference>
<dbReference type="Gene3D" id="2.30.140.10">
    <property type="entry name" value="Spermidine synthase, tetramerisation domain"/>
    <property type="match status" value="1"/>
</dbReference>
<dbReference type="Gene3D" id="3.40.50.150">
    <property type="entry name" value="Vaccinia Virus protein VP39"/>
    <property type="match status" value="1"/>
</dbReference>
<dbReference type="HAMAP" id="MF_00198">
    <property type="entry name" value="Spermidine_synth"/>
    <property type="match status" value="1"/>
</dbReference>
<dbReference type="InterPro" id="IPR030374">
    <property type="entry name" value="PABS"/>
</dbReference>
<dbReference type="InterPro" id="IPR030373">
    <property type="entry name" value="PABS_CS"/>
</dbReference>
<dbReference type="InterPro" id="IPR029063">
    <property type="entry name" value="SAM-dependent_MTases_sf"/>
</dbReference>
<dbReference type="InterPro" id="IPR001045">
    <property type="entry name" value="Spermi_synthase"/>
</dbReference>
<dbReference type="InterPro" id="IPR035246">
    <property type="entry name" value="Spermidine_synt_N"/>
</dbReference>
<dbReference type="InterPro" id="IPR037163">
    <property type="entry name" value="Spermidine_synt_N_sf"/>
</dbReference>
<dbReference type="NCBIfam" id="NF002010">
    <property type="entry name" value="PRK00811.1"/>
    <property type="match status" value="1"/>
</dbReference>
<dbReference type="PANTHER" id="PTHR43317">
    <property type="entry name" value="THERMOSPERMINE SYNTHASE ACAULIS5"/>
    <property type="match status" value="1"/>
</dbReference>
<dbReference type="PANTHER" id="PTHR43317:SF1">
    <property type="entry name" value="THERMOSPERMINE SYNTHASE ACAULIS5"/>
    <property type="match status" value="1"/>
</dbReference>
<dbReference type="Pfam" id="PF17284">
    <property type="entry name" value="Spermine_synt_N"/>
    <property type="match status" value="1"/>
</dbReference>
<dbReference type="Pfam" id="PF01564">
    <property type="entry name" value="Spermine_synth"/>
    <property type="match status" value="1"/>
</dbReference>
<dbReference type="SUPFAM" id="SSF53335">
    <property type="entry name" value="S-adenosyl-L-methionine-dependent methyltransferases"/>
    <property type="match status" value="1"/>
</dbReference>
<dbReference type="PROSITE" id="PS01330">
    <property type="entry name" value="PABS_1"/>
    <property type="match status" value="1"/>
</dbReference>
<dbReference type="PROSITE" id="PS51006">
    <property type="entry name" value="PABS_2"/>
    <property type="match status" value="1"/>
</dbReference>
<keyword id="KW-0963">Cytoplasm</keyword>
<keyword id="KW-0620">Polyamine biosynthesis</keyword>
<keyword id="KW-1185">Reference proteome</keyword>
<keyword id="KW-0745">Spermidine biosynthesis</keyword>
<keyword id="KW-0808">Transferase</keyword>
<gene>
    <name evidence="1" type="primary">speE</name>
    <name type="ordered locus">Saci_0643</name>
</gene>
<evidence type="ECO:0000255" key="1">
    <source>
        <dbReference type="HAMAP-Rule" id="MF_00198"/>
    </source>
</evidence>
<accession>Q4JAZ8</accession>
<sequence>MFEWTWHLEWQTPQEFHAHAIKRILIEERSEFQRVILAELFRFGKALIIDGKIQSTLADEFIYHESLVHPLLISLEDPENILILGGGEGATLREALRYKSVRKVTMVDIDPVVIKFAKQNLQEWHMGSFDDSRTNLIIGDGYKFVKETNEKYNAIILDLTDPIQDSPSQLLYTSEFYRDLKSIITPNGGLVTQATSPSFSLDTFAIIYSTLKTVFKNVSAGITYVPSFDGLWGFIYASDVTNPAHLNRNQINDRIKERVTGSLRFYDGETHEMLFRVPKYIREKIENEKRVSTRENPVATPA</sequence>
<reference key="1">
    <citation type="journal article" date="2005" name="J. Bacteriol.">
        <title>The genome of Sulfolobus acidocaldarius, a model organism of the Crenarchaeota.</title>
        <authorList>
            <person name="Chen L."/>
            <person name="Bruegger K."/>
            <person name="Skovgaard M."/>
            <person name="Redder P."/>
            <person name="She Q."/>
            <person name="Torarinsson E."/>
            <person name="Greve B."/>
            <person name="Awayez M."/>
            <person name="Zibat A."/>
            <person name="Klenk H.-P."/>
            <person name="Garrett R.A."/>
        </authorList>
    </citation>
    <scope>NUCLEOTIDE SEQUENCE [LARGE SCALE GENOMIC DNA]</scope>
    <source>
        <strain>ATCC 33909 / DSM 639 / JCM 8929 / NBRC 15157 / NCIMB 11770</strain>
    </source>
</reference>
<protein>
    <recommendedName>
        <fullName evidence="1">Polyamine aminopropyltransferase</fullName>
    </recommendedName>
    <alternativeName>
        <fullName evidence="1">Putrescine aminopropyltransferase</fullName>
        <shortName evidence="1">PAPT</shortName>
    </alternativeName>
    <alternativeName>
        <fullName evidence="1">Spermidine synthase</fullName>
        <shortName evidence="1">SPDS</shortName>
        <shortName evidence="1">SPDSY</shortName>
        <ecNumber evidence="1">2.5.1.16</ecNumber>
    </alternativeName>
</protein>